<comment type="function">
    <text evidence="1">Formation of pseudouridine at positions 38, 39 and 40 in the anticodon stem and loop of transfer RNAs.</text>
</comment>
<comment type="catalytic activity">
    <reaction evidence="1">
        <text>uridine(38/39/40) in tRNA = pseudouridine(38/39/40) in tRNA</text>
        <dbReference type="Rhea" id="RHEA:22376"/>
        <dbReference type="Rhea" id="RHEA-COMP:10085"/>
        <dbReference type="Rhea" id="RHEA-COMP:10087"/>
        <dbReference type="ChEBI" id="CHEBI:65314"/>
        <dbReference type="ChEBI" id="CHEBI:65315"/>
        <dbReference type="EC" id="5.4.99.12"/>
    </reaction>
</comment>
<comment type="subunit">
    <text evidence="1">Homodimer.</text>
</comment>
<comment type="similarity">
    <text evidence="1">Belongs to the tRNA pseudouridine synthase TruA family.</text>
</comment>
<name>TRUA_BURO0</name>
<gene>
    <name evidence="1" type="primary">truA</name>
    <name type="ordered locus">Bcenmc03_3572</name>
</gene>
<keyword id="KW-0413">Isomerase</keyword>
<keyword id="KW-0819">tRNA processing</keyword>
<feature type="chain" id="PRO_1000097725" description="tRNA pseudouridine synthase A">
    <location>
        <begin position="1"/>
        <end position="270"/>
    </location>
</feature>
<feature type="active site" description="Nucleophile" evidence="1">
    <location>
        <position position="51"/>
    </location>
</feature>
<feature type="binding site" evidence="1">
    <location>
        <position position="109"/>
    </location>
    <ligand>
        <name>substrate</name>
    </ligand>
</feature>
<sequence length="270" mass="30166">MRIALGIQYDGAAFCGWQAQPHGKTVQDRLEHALAEFARVPLHTTVAGRTDTGVHGLGQVVHFDTDLEREVFSWVRGTNAFLPSTVSVQWAKPMPDTFHARFSAFERTYYYALYVHPVRSPMLAGRAGWIHTPLDDDAMRAAAAHLIGEHDFSSFRSSECQSKTPVKHLYQIDVRRAGHFIHFRFRANAFLHHMVRNLMGCLVAVGRGRYPADWLADVLAGRDRNLAAPTFMADGLYLAHVGYPAEFAVPPAQLGSVPWSSVWADLDPQT</sequence>
<proteinExistence type="inferred from homology"/>
<organism>
    <name type="scientific">Burkholderia orbicola (strain MC0-3)</name>
    <dbReference type="NCBI Taxonomy" id="406425"/>
    <lineage>
        <taxon>Bacteria</taxon>
        <taxon>Pseudomonadati</taxon>
        <taxon>Pseudomonadota</taxon>
        <taxon>Betaproteobacteria</taxon>
        <taxon>Burkholderiales</taxon>
        <taxon>Burkholderiaceae</taxon>
        <taxon>Burkholderia</taxon>
        <taxon>Burkholderia cepacia complex</taxon>
        <taxon>Burkholderia orbicola</taxon>
    </lineage>
</organism>
<dbReference type="EC" id="5.4.99.12" evidence="1"/>
<dbReference type="EMBL" id="CP000959">
    <property type="protein sequence ID" value="ACA92724.1"/>
    <property type="molecule type" value="Genomic_DNA"/>
</dbReference>
<dbReference type="RefSeq" id="WP_011548093.1">
    <property type="nucleotide sequence ID" value="NC_010515.1"/>
</dbReference>
<dbReference type="SMR" id="B1K370"/>
<dbReference type="GeneID" id="83050347"/>
<dbReference type="KEGG" id="bcm:Bcenmc03_3572"/>
<dbReference type="HOGENOM" id="CLU_014673_0_2_4"/>
<dbReference type="Proteomes" id="UP000002169">
    <property type="component" value="Chromosome 2"/>
</dbReference>
<dbReference type="GO" id="GO:0003723">
    <property type="term" value="F:RNA binding"/>
    <property type="evidence" value="ECO:0007669"/>
    <property type="project" value="InterPro"/>
</dbReference>
<dbReference type="GO" id="GO:0160147">
    <property type="term" value="F:tRNA pseudouridine(38-40) synthase activity"/>
    <property type="evidence" value="ECO:0007669"/>
    <property type="project" value="UniProtKB-EC"/>
</dbReference>
<dbReference type="GO" id="GO:0031119">
    <property type="term" value="P:tRNA pseudouridine synthesis"/>
    <property type="evidence" value="ECO:0007669"/>
    <property type="project" value="UniProtKB-UniRule"/>
</dbReference>
<dbReference type="CDD" id="cd02570">
    <property type="entry name" value="PseudoU_synth_EcTruA"/>
    <property type="match status" value="1"/>
</dbReference>
<dbReference type="FunFam" id="3.30.70.580:FF:000001">
    <property type="entry name" value="tRNA pseudouridine synthase A"/>
    <property type="match status" value="1"/>
</dbReference>
<dbReference type="Gene3D" id="3.30.70.660">
    <property type="entry name" value="Pseudouridine synthase I, catalytic domain, C-terminal subdomain"/>
    <property type="match status" value="1"/>
</dbReference>
<dbReference type="Gene3D" id="3.30.70.580">
    <property type="entry name" value="Pseudouridine synthase I, catalytic domain, N-terminal subdomain"/>
    <property type="match status" value="1"/>
</dbReference>
<dbReference type="HAMAP" id="MF_00171">
    <property type="entry name" value="TruA"/>
    <property type="match status" value="1"/>
</dbReference>
<dbReference type="InterPro" id="IPR020103">
    <property type="entry name" value="PsdUridine_synth_cat_dom_sf"/>
</dbReference>
<dbReference type="InterPro" id="IPR001406">
    <property type="entry name" value="PsdUridine_synth_TruA"/>
</dbReference>
<dbReference type="InterPro" id="IPR020097">
    <property type="entry name" value="PsdUridine_synth_TruA_a/b_dom"/>
</dbReference>
<dbReference type="InterPro" id="IPR020095">
    <property type="entry name" value="PsdUridine_synth_TruA_C"/>
</dbReference>
<dbReference type="InterPro" id="IPR020094">
    <property type="entry name" value="TruA/RsuA/RluB/E/F_N"/>
</dbReference>
<dbReference type="NCBIfam" id="TIGR00071">
    <property type="entry name" value="hisT_truA"/>
    <property type="match status" value="1"/>
</dbReference>
<dbReference type="PANTHER" id="PTHR11142">
    <property type="entry name" value="PSEUDOURIDYLATE SYNTHASE"/>
    <property type="match status" value="1"/>
</dbReference>
<dbReference type="PANTHER" id="PTHR11142:SF0">
    <property type="entry name" value="TRNA PSEUDOURIDINE SYNTHASE-LIKE 1"/>
    <property type="match status" value="1"/>
</dbReference>
<dbReference type="Pfam" id="PF01416">
    <property type="entry name" value="PseudoU_synth_1"/>
    <property type="match status" value="2"/>
</dbReference>
<dbReference type="PIRSF" id="PIRSF001430">
    <property type="entry name" value="tRNA_psdUrid_synth"/>
    <property type="match status" value="1"/>
</dbReference>
<dbReference type="SUPFAM" id="SSF55120">
    <property type="entry name" value="Pseudouridine synthase"/>
    <property type="match status" value="1"/>
</dbReference>
<protein>
    <recommendedName>
        <fullName evidence="1">tRNA pseudouridine synthase A</fullName>
        <ecNumber evidence="1">5.4.99.12</ecNumber>
    </recommendedName>
    <alternativeName>
        <fullName evidence="1">tRNA pseudouridine(38-40) synthase</fullName>
    </alternativeName>
    <alternativeName>
        <fullName evidence="1">tRNA pseudouridylate synthase I</fullName>
    </alternativeName>
    <alternativeName>
        <fullName evidence="1">tRNA-uridine isomerase I</fullName>
    </alternativeName>
</protein>
<accession>B1K370</accession>
<reference key="1">
    <citation type="submission" date="2008-02" db="EMBL/GenBank/DDBJ databases">
        <title>Complete sequence of chromosome 2 of Burkholderia cenocepacia MC0-3.</title>
        <authorList>
            <person name="Copeland A."/>
            <person name="Lucas S."/>
            <person name="Lapidus A."/>
            <person name="Barry K."/>
            <person name="Bruce D."/>
            <person name="Goodwin L."/>
            <person name="Glavina del Rio T."/>
            <person name="Dalin E."/>
            <person name="Tice H."/>
            <person name="Pitluck S."/>
            <person name="Chain P."/>
            <person name="Malfatti S."/>
            <person name="Shin M."/>
            <person name="Vergez L."/>
            <person name="Schmutz J."/>
            <person name="Larimer F."/>
            <person name="Land M."/>
            <person name="Hauser L."/>
            <person name="Kyrpides N."/>
            <person name="Mikhailova N."/>
            <person name="Tiedje J."/>
            <person name="Richardson P."/>
        </authorList>
    </citation>
    <scope>NUCLEOTIDE SEQUENCE [LARGE SCALE GENOMIC DNA]</scope>
    <source>
        <strain>MC0-3</strain>
    </source>
</reference>
<evidence type="ECO:0000255" key="1">
    <source>
        <dbReference type="HAMAP-Rule" id="MF_00171"/>
    </source>
</evidence>